<dbReference type="EMBL" id="U00096">
    <property type="protein sequence ID" value="ACO59989.1"/>
    <property type="molecule type" value="Genomic_DNA"/>
</dbReference>
<dbReference type="EMBL" id="AP009048">
    <property type="status" value="NOT_ANNOTATED_CDS"/>
    <property type="molecule type" value="Genomic_DNA"/>
</dbReference>
<dbReference type="RefSeq" id="WP_001248770.1">
    <property type="nucleotide sequence ID" value="NZ_STEB01000010.1"/>
</dbReference>
<dbReference type="RefSeq" id="YP_002791237.1">
    <property type="nucleotide sequence ID" value="NC_000913.3"/>
</dbReference>
<dbReference type="SMR" id="C1P5Z7"/>
<dbReference type="FunCoup" id="C1P5Z7">
    <property type="interactions" value="2"/>
</dbReference>
<dbReference type="STRING" id="511145.b4662"/>
<dbReference type="TCDB" id="4.A.1.1.1">
    <property type="family name" value="the pts glucose-glucoside (glc) family"/>
</dbReference>
<dbReference type="PaxDb" id="511145-b4662"/>
<dbReference type="EnsemblBacteria" id="ACO59989">
    <property type="protein sequence ID" value="ACO59989"/>
    <property type="gene ID" value="b4662"/>
</dbReference>
<dbReference type="GeneID" id="7751624"/>
<dbReference type="GeneID" id="93777367"/>
<dbReference type="KEGG" id="eco:b4662"/>
<dbReference type="PATRIC" id="fig|1411691.4.peg.2212"/>
<dbReference type="eggNOG" id="ENOG5031KWV">
    <property type="taxonomic scope" value="Bacteria"/>
</dbReference>
<dbReference type="InParanoid" id="C1P5Z7"/>
<dbReference type="OrthoDB" id="6488438at2"/>
<dbReference type="BioCyc" id="EcoCyc:MONOMER0-2842"/>
<dbReference type="PRO" id="PR:C1P5Z7"/>
<dbReference type="Proteomes" id="UP000000625">
    <property type="component" value="Chromosome"/>
</dbReference>
<dbReference type="GO" id="GO:0004857">
    <property type="term" value="F:enzyme inhibitor activity"/>
    <property type="evidence" value="ECO:0000315"/>
    <property type="project" value="EcoCyc"/>
</dbReference>
<dbReference type="GO" id="GO:0046325">
    <property type="term" value="P:negative regulation of D-glucose import"/>
    <property type="evidence" value="ECO:0000315"/>
    <property type="project" value="EcoCyc"/>
</dbReference>
<dbReference type="GO" id="GO:0009401">
    <property type="term" value="P:phosphoenolpyruvate-dependent sugar phosphotransferase system"/>
    <property type="evidence" value="ECO:0007669"/>
    <property type="project" value="UniProtKB-KW"/>
</dbReference>
<dbReference type="InterPro" id="IPR031767">
    <property type="entry name" value="SgrT"/>
</dbReference>
<dbReference type="Pfam" id="PF15894">
    <property type="entry name" value="SgrT"/>
    <property type="match status" value="1"/>
</dbReference>
<name>SGRT_ECOLI</name>
<keyword id="KW-0598">Phosphotransferase system</keyword>
<keyword id="KW-1185">Reference proteome</keyword>
<keyword id="KW-0762">Sugar transport</keyword>
<keyword id="KW-0813">Transport</keyword>
<proteinExistence type="evidence at protein level"/>
<gene>
    <name type="primary">sgrT</name>
    <name type="ordered locus">b4662</name>
    <name type="ordered locus">JW0068.1</name>
</gene>
<evidence type="ECO:0000269" key="1">
    <source>
    </source>
</evidence>
<evidence type="ECO:0000269" key="2">
    <source>
    </source>
</evidence>
<feature type="chain" id="PRO_0000381978" description="Putative inhibitor of glucose uptake transporter SgrT">
    <location>
        <begin position="1"/>
        <end position="43"/>
    </location>
</feature>
<reference key="1">
    <citation type="journal article" date="1997" name="Science">
        <title>The complete genome sequence of Escherichia coli K-12.</title>
        <authorList>
            <person name="Blattner F.R."/>
            <person name="Plunkett G. III"/>
            <person name="Bloch C.A."/>
            <person name="Perna N.T."/>
            <person name="Burland V."/>
            <person name="Riley M."/>
            <person name="Collado-Vides J."/>
            <person name="Glasner J.D."/>
            <person name="Rode C.K."/>
            <person name="Mayhew G.F."/>
            <person name="Gregor J."/>
            <person name="Davis N.W."/>
            <person name="Kirkpatrick H.A."/>
            <person name="Goeden M.A."/>
            <person name="Rose D.J."/>
            <person name="Mau B."/>
            <person name="Shao Y."/>
        </authorList>
    </citation>
    <scope>NUCLEOTIDE SEQUENCE [LARGE SCALE GENOMIC DNA]</scope>
    <source>
        <strain>K12 / MG1655 / ATCC 47076</strain>
    </source>
</reference>
<reference key="2">
    <citation type="journal article" date="2006" name="Mol. Syst. Biol.">
        <title>Highly accurate genome sequences of Escherichia coli K-12 strains MG1655 and W3110.</title>
        <authorList>
            <person name="Hayashi K."/>
            <person name="Morooka N."/>
            <person name="Yamamoto Y."/>
            <person name="Fujita K."/>
            <person name="Isono K."/>
            <person name="Choi S."/>
            <person name="Ohtsubo E."/>
            <person name="Baba T."/>
            <person name="Wanner B.L."/>
            <person name="Mori H."/>
            <person name="Horiuchi T."/>
        </authorList>
    </citation>
    <scope>NUCLEOTIDE SEQUENCE [LARGE SCALE GENOMIC DNA]</scope>
    <source>
        <strain>K12 / W3110 / ATCC 27325 / DSM 5911</strain>
    </source>
</reference>
<reference key="3">
    <citation type="journal article" date="2007" name="Proc. Natl. Acad. Sci. U.S.A.">
        <title>A dual function for a bacterial small RNA: SgrS performs base pairing-dependent regulation and encodes a functional polypeptide.</title>
        <authorList>
            <person name="Wadler C.S."/>
            <person name="Vanderpool C.K."/>
        </authorList>
    </citation>
    <scope>IDENTIFICATION</scope>
    <scope>FUNCTION IN CONTROL OF GLUCOSE PHOSPHOTRANSFERASE SYSTEM</scope>
    <scope>INDUCTION</scope>
    <source>
        <strain>K12 / MG1655 / ATCC 47076</strain>
    </source>
</reference>
<reference key="4">
    <citation type="journal article" date="2008" name="Mol. Microbiol.">
        <title>Small membrane proteins found by comparative genomics and ribosome binding site models.</title>
        <authorList>
            <person name="Hemm M.R."/>
            <person name="Paul B.J."/>
            <person name="Schneider T.D."/>
            <person name="Storz G."/>
            <person name="Rudd K.E."/>
        </authorList>
    </citation>
    <scope>IDENTIFICATION</scope>
    <scope>INDUCTION</scope>
    <source>
        <strain>K12 / MG1655 / ATCC 47076</strain>
    </source>
</reference>
<protein>
    <recommendedName>
        <fullName>Putative inhibitor of glucose uptake transporter SgrT</fullName>
    </recommendedName>
</protein>
<organism>
    <name type="scientific">Escherichia coli (strain K12)</name>
    <dbReference type="NCBI Taxonomy" id="83333"/>
    <lineage>
        <taxon>Bacteria</taxon>
        <taxon>Pseudomonadati</taxon>
        <taxon>Pseudomonadota</taxon>
        <taxon>Gammaproteobacteria</taxon>
        <taxon>Enterobacterales</taxon>
        <taxon>Enterobacteriaceae</taxon>
        <taxon>Escherichia</taxon>
    </lineage>
</organism>
<accession>C1P5Z7</accession>
<sequence length="43" mass="5338">MRQFYQHYFTATAKLCWLRWLSVPQRLTMLEGLMQWDDRNSES</sequence>
<comment type="function">
    <text evidence="1">Acts to promote recovery from glucose-phosphate stress due to intracellular accumulation of glucose-6-phosphate caused by disruption of glycolytic flux or in the presence of (toxic) non-metabolizable glucose phosphate analogs. It may do so by inhibiting the transporter activity for glucose uptake (PtsG) as cells that overexpress this protein do not seem to import glucose although they have nearly wild-type levels of PtsG.</text>
</comment>
<comment type="induction">
    <text evidence="1 2">By (toxic) non-metabolizable glucose phosphate analogs under the control of SgrR (at protein level).</text>
</comment>
<comment type="miscellaneous">
    <text>Entirely encoded within the transcript for the small RNA sgrS.</text>
</comment>